<accession>Q5X498</accession>
<evidence type="ECO:0000255" key="1">
    <source>
        <dbReference type="HAMAP-Rule" id="MF_01703"/>
    </source>
</evidence>
<keyword id="KW-0067">ATP-binding</keyword>
<keyword id="KW-0997">Cell inner membrane</keyword>
<keyword id="KW-1003">Cell membrane</keyword>
<keyword id="KW-0445">Lipid transport</keyword>
<keyword id="KW-0472">Membrane</keyword>
<keyword id="KW-0547">Nucleotide-binding</keyword>
<keyword id="KW-1278">Translocase</keyword>
<keyword id="KW-0812">Transmembrane</keyword>
<keyword id="KW-1133">Transmembrane helix</keyword>
<keyword id="KW-0813">Transport</keyword>
<feature type="chain" id="PRO_0000092584" description="ATP-dependent lipid A-core flippase">
    <location>
        <begin position="1"/>
        <end position="588"/>
    </location>
</feature>
<feature type="transmembrane region" description="Helical" evidence="1">
    <location>
        <begin position="23"/>
        <end position="43"/>
    </location>
</feature>
<feature type="transmembrane region" description="Helical" evidence="1">
    <location>
        <begin position="56"/>
        <end position="76"/>
    </location>
</feature>
<feature type="transmembrane region" description="Helical" evidence="1">
    <location>
        <begin position="141"/>
        <end position="161"/>
    </location>
</feature>
<feature type="transmembrane region" description="Helical" evidence="1">
    <location>
        <begin position="162"/>
        <end position="182"/>
    </location>
</feature>
<feature type="transmembrane region" description="Helical" evidence="1">
    <location>
        <begin position="257"/>
        <end position="277"/>
    </location>
</feature>
<feature type="transmembrane region" description="Helical" evidence="1">
    <location>
        <begin position="278"/>
        <end position="298"/>
    </location>
</feature>
<feature type="domain" description="ABC transmembrane type-1" evidence="1">
    <location>
        <begin position="28"/>
        <end position="310"/>
    </location>
</feature>
<feature type="domain" description="ABC transporter" evidence="1">
    <location>
        <begin position="342"/>
        <end position="576"/>
    </location>
</feature>
<feature type="binding site" evidence="1">
    <location>
        <begin position="375"/>
        <end position="382"/>
    </location>
    <ligand>
        <name>ATP</name>
        <dbReference type="ChEBI" id="CHEBI:30616"/>
    </ligand>
</feature>
<comment type="function">
    <text evidence="1">Involved in lipopolysaccharide (LPS) biosynthesis. Translocates lipid A-core from the inner to the outer leaflet of the inner membrane. Transmembrane domains (TMD) form a pore in the inner membrane and the ATP-binding domain (NBD) is responsible for energy generation.</text>
</comment>
<comment type="catalytic activity">
    <reaction evidence="1">
        <text>ATP + H2O + lipid A-core oligosaccharideSide 1 = ADP + phosphate + lipid A-core oligosaccharideSide 2.</text>
        <dbReference type="EC" id="7.5.2.6"/>
    </reaction>
</comment>
<comment type="subunit">
    <text evidence="1">Homodimer.</text>
</comment>
<comment type="subcellular location">
    <subcellularLocation>
        <location evidence="1">Cell inner membrane</location>
        <topology evidence="1">Multi-pass membrane protein</topology>
    </subcellularLocation>
</comment>
<comment type="domain">
    <text evidence="1">In MsbA the ATP-binding domain (NBD) and the transmembrane domain (TMD) are fused.</text>
</comment>
<comment type="similarity">
    <text evidence="1">Belongs to the ABC transporter superfamily. Lipid exporter (TC 3.A.1.106) family.</text>
</comment>
<proteinExistence type="inferred from homology"/>
<organism>
    <name type="scientific">Legionella pneumophila (strain Paris)</name>
    <dbReference type="NCBI Taxonomy" id="297246"/>
    <lineage>
        <taxon>Bacteria</taxon>
        <taxon>Pseudomonadati</taxon>
        <taxon>Pseudomonadota</taxon>
        <taxon>Gammaproteobacteria</taxon>
        <taxon>Legionellales</taxon>
        <taxon>Legionellaceae</taxon>
        <taxon>Legionella</taxon>
    </lineage>
</organism>
<reference key="1">
    <citation type="journal article" date="2004" name="Nat. Genet.">
        <title>Evidence in the Legionella pneumophila genome for exploitation of host cell functions and high genome plasticity.</title>
        <authorList>
            <person name="Cazalet C."/>
            <person name="Rusniok C."/>
            <person name="Brueggemann H."/>
            <person name="Zidane N."/>
            <person name="Magnier A."/>
            <person name="Ma L."/>
            <person name="Tichit M."/>
            <person name="Jarraud S."/>
            <person name="Bouchier C."/>
            <person name="Vandenesch F."/>
            <person name="Kunst F."/>
            <person name="Etienne J."/>
            <person name="Glaser P."/>
            <person name="Buchrieser C."/>
        </authorList>
    </citation>
    <scope>NUCLEOTIDE SEQUENCE [LARGE SCALE GENOMIC DNA]</scope>
    <source>
        <strain>Paris</strain>
    </source>
</reference>
<dbReference type="EC" id="7.5.2.6" evidence="1"/>
<dbReference type="EMBL" id="CR628336">
    <property type="protein sequence ID" value="CAH12934.1"/>
    <property type="molecule type" value="Genomic_DNA"/>
</dbReference>
<dbReference type="RefSeq" id="WP_011214077.1">
    <property type="nucleotide sequence ID" value="NC_006368.1"/>
</dbReference>
<dbReference type="SMR" id="Q5X498"/>
<dbReference type="KEGG" id="lpp:lpp1782"/>
<dbReference type="LegioList" id="lpp1782"/>
<dbReference type="HOGENOM" id="CLU_000604_84_3_6"/>
<dbReference type="GO" id="GO:0005886">
    <property type="term" value="C:plasma membrane"/>
    <property type="evidence" value="ECO:0007669"/>
    <property type="project" value="UniProtKB-SubCell"/>
</dbReference>
<dbReference type="GO" id="GO:0015421">
    <property type="term" value="F:ABC-type oligopeptide transporter activity"/>
    <property type="evidence" value="ECO:0007669"/>
    <property type="project" value="TreeGrafter"/>
</dbReference>
<dbReference type="GO" id="GO:0005524">
    <property type="term" value="F:ATP binding"/>
    <property type="evidence" value="ECO:0007669"/>
    <property type="project" value="UniProtKB-KW"/>
</dbReference>
<dbReference type="GO" id="GO:0016887">
    <property type="term" value="F:ATP hydrolysis activity"/>
    <property type="evidence" value="ECO:0007669"/>
    <property type="project" value="InterPro"/>
</dbReference>
<dbReference type="GO" id="GO:0034040">
    <property type="term" value="F:ATPase-coupled lipid transmembrane transporter activity"/>
    <property type="evidence" value="ECO:0007669"/>
    <property type="project" value="InterPro"/>
</dbReference>
<dbReference type="CDD" id="cd18552">
    <property type="entry name" value="ABC_6TM_MsbA_like"/>
    <property type="match status" value="1"/>
</dbReference>
<dbReference type="FunFam" id="3.40.50.300:FF:000287">
    <property type="entry name" value="Multidrug ABC transporter ATP-binding protein"/>
    <property type="match status" value="1"/>
</dbReference>
<dbReference type="Gene3D" id="1.20.1560.10">
    <property type="entry name" value="ABC transporter type 1, transmembrane domain"/>
    <property type="match status" value="1"/>
</dbReference>
<dbReference type="Gene3D" id="3.40.50.300">
    <property type="entry name" value="P-loop containing nucleotide triphosphate hydrolases"/>
    <property type="match status" value="1"/>
</dbReference>
<dbReference type="InterPro" id="IPR003593">
    <property type="entry name" value="AAA+_ATPase"/>
</dbReference>
<dbReference type="InterPro" id="IPR011527">
    <property type="entry name" value="ABC1_TM_dom"/>
</dbReference>
<dbReference type="InterPro" id="IPR036640">
    <property type="entry name" value="ABC1_TM_sf"/>
</dbReference>
<dbReference type="InterPro" id="IPR003439">
    <property type="entry name" value="ABC_transporter-like_ATP-bd"/>
</dbReference>
<dbReference type="InterPro" id="IPR017871">
    <property type="entry name" value="ABC_transporter-like_CS"/>
</dbReference>
<dbReference type="InterPro" id="IPR011917">
    <property type="entry name" value="ABC_transpr_lipidA"/>
</dbReference>
<dbReference type="InterPro" id="IPR027417">
    <property type="entry name" value="P-loop_NTPase"/>
</dbReference>
<dbReference type="InterPro" id="IPR039421">
    <property type="entry name" value="Type_1_exporter"/>
</dbReference>
<dbReference type="NCBIfam" id="TIGR02203">
    <property type="entry name" value="MsbA_lipidA"/>
    <property type="match status" value="1"/>
</dbReference>
<dbReference type="PANTHER" id="PTHR43394:SF1">
    <property type="entry name" value="ATP-BINDING CASSETTE SUB-FAMILY B MEMBER 10, MITOCHONDRIAL"/>
    <property type="match status" value="1"/>
</dbReference>
<dbReference type="PANTHER" id="PTHR43394">
    <property type="entry name" value="ATP-DEPENDENT PERMEASE MDL1, MITOCHONDRIAL"/>
    <property type="match status" value="1"/>
</dbReference>
<dbReference type="Pfam" id="PF00664">
    <property type="entry name" value="ABC_membrane"/>
    <property type="match status" value="1"/>
</dbReference>
<dbReference type="Pfam" id="PF00005">
    <property type="entry name" value="ABC_tran"/>
    <property type="match status" value="1"/>
</dbReference>
<dbReference type="SMART" id="SM00382">
    <property type="entry name" value="AAA"/>
    <property type="match status" value="1"/>
</dbReference>
<dbReference type="SUPFAM" id="SSF90123">
    <property type="entry name" value="ABC transporter transmembrane region"/>
    <property type="match status" value="1"/>
</dbReference>
<dbReference type="SUPFAM" id="SSF52540">
    <property type="entry name" value="P-loop containing nucleoside triphosphate hydrolases"/>
    <property type="match status" value="1"/>
</dbReference>
<dbReference type="PROSITE" id="PS50929">
    <property type="entry name" value="ABC_TM1F"/>
    <property type="match status" value="1"/>
</dbReference>
<dbReference type="PROSITE" id="PS00211">
    <property type="entry name" value="ABC_TRANSPORTER_1"/>
    <property type="match status" value="1"/>
</dbReference>
<dbReference type="PROSITE" id="PS50893">
    <property type="entry name" value="ABC_TRANSPORTER_2"/>
    <property type="match status" value="1"/>
</dbReference>
<dbReference type="PROSITE" id="PS51239">
    <property type="entry name" value="MSBA"/>
    <property type="match status" value="1"/>
</dbReference>
<protein>
    <recommendedName>
        <fullName evidence="1">ATP-dependent lipid A-core flippase</fullName>
        <ecNumber evidence="1">7.5.2.6</ecNumber>
    </recommendedName>
    <alternativeName>
        <fullName evidence="1">Lipid A export ATP-binding/permease protein MsbA</fullName>
    </alternativeName>
</protein>
<gene>
    <name evidence="1" type="primary">msbA</name>
    <name type="ordered locus">lpp1782</name>
</gene>
<name>MSBA_LEGPA</name>
<sequence>MKNNLPIKSRLLYKRLLSYVKPFWPVLLLGVLANILYSGIDAGFTYMTKLFLDKSFITIDLDFVKQIPLIVLIGITLRGLVSSLGSYCMTWVARSVVKVLRQTVFSHIIHLPADYYDEATSGQLLSKILYDVEQVAQVSADALTDFIQNICLVIGLLTVMMVICWQLSLMFLLTIPFVGIIVNYTNKRVRRISHKVQKTMGEVTEIASEAIEGYRVVRIFGGERYEITKFNKATEYSRKNDMKVAISKAINVSGVQLVIAIGIAMIIMAAIHLSTVITISAGSFLAIIAAMLQLIKPMKTLTTLNATIQRGLAGAESVFNLLDLPLERNNGLILKEKVRGEIEFKHVYHAYRQSQNILHDVNFVIEAGTSVALVGHSGSGKTTIASLLPRFYELSQGMITLDGMPIQQLSLESLRKQISLVSQNVTLFNDTLANNIAYGRFDASREQIITAAKLAYADEFIKQLPDGYDTRVGENGVLLSGGQRQRIAIARAILKDAPILILDEATSALDSESEHYIQAALEQVMKGRTTLIIAHRLSTIKHAHKIIVLQHGRIVEQGSHQELLDMDGHYAQLYKVQQFGRINEEVVV</sequence>